<dbReference type="EMBL" id="CP000031">
    <property type="protein sequence ID" value="AAV96214.1"/>
    <property type="molecule type" value="Genomic_DNA"/>
</dbReference>
<dbReference type="RefSeq" id="WP_011048672.1">
    <property type="nucleotide sequence ID" value="NC_003911.12"/>
</dbReference>
<dbReference type="SMR" id="Q5LP74"/>
<dbReference type="STRING" id="246200.SPO2976"/>
<dbReference type="PaxDb" id="246200-SPO2976"/>
<dbReference type="KEGG" id="sil:SPO2976"/>
<dbReference type="eggNOG" id="COG2220">
    <property type="taxonomic scope" value="Bacteria"/>
</dbReference>
<dbReference type="HOGENOM" id="CLU_070010_4_0_5"/>
<dbReference type="OrthoDB" id="9789133at2"/>
<dbReference type="Proteomes" id="UP000001023">
    <property type="component" value="Chromosome"/>
</dbReference>
<dbReference type="GO" id="GO:0016787">
    <property type="term" value="F:hydrolase activity"/>
    <property type="evidence" value="ECO:0007669"/>
    <property type="project" value="UniProtKB-UniRule"/>
</dbReference>
<dbReference type="Gene3D" id="3.60.15.10">
    <property type="entry name" value="Ribonuclease Z/Hydroxyacylglutathione hydrolase-like"/>
    <property type="match status" value="1"/>
</dbReference>
<dbReference type="HAMAP" id="MF_00457">
    <property type="entry name" value="UPF0173"/>
    <property type="match status" value="1"/>
</dbReference>
<dbReference type="InterPro" id="IPR001279">
    <property type="entry name" value="Metallo-B-lactamas"/>
</dbReference>
<dbReference type="InterPro" id="IPR036866">
    <property type="entry name" value="RibonucZ/Hydroxyglut_hydro"/>
</dbReference>
<dbReference type="InterPro" id="IPR022877">
    <property type="entry name" value="UPF0173"/>
</dbReference>
<dbReference type="InterPro" id="IPR050114">
    <property type="entry name" value="UPF0173_UPF0282_UlaG_hydrolase"/>
</dbReference>
<dbReference type="NCBIfam" id="NF001911">
    <property type="entry name" value="PRK00685.1"/>
    <property type="match status" value="1"/>
</dbReference>
<dbReference type="PANTHER" id="PTHR43546:SF3">
    <property type="entry name" value="UPF0173 METAL-DEPENDENT HYDROLASE MJ1163"/>
    <property type="match status" value="1"/>
</dbReference>
<dbReference type="PANTHER" id="PTHR43546">
    <property type="entry name" value="UPF0173 METAL-DEPENDENT HYDROLASE MJ1163-RELATED"/>
    <property type="match status" value="1"/>
</dbReference>
<dbReference type="Pfam" id="PF12706">
    <property type="entry name" value="Lactamase_B_2"/>
    <property type="match status" value="1"/>
</dbReference>
<dbReference type="SMART" id="SM00849">
    <property type="entry name" value="Lactamase_B"/>
    <property type="match status" value="1"/>
</dbReference>
<dbReference type="SUPFAM" id="SSF56281">
    <property type="entry name" value="Metallo-hydrolase/oxidoreductase"/>
    <property type="match status" value="1"/>
</dbReference>
<accession>Q5LP74</accession>
<protein>
    <recommendedName>
        <fullName evidence="1">UPF0173 metal-dependent hydrolase SPO2976</fullName>
    </recommendedName>
</protein>
<proteinExistence type="inferred from homology"/>
<organism>
    <name type="scientific">Ruegeria pomeroyi (strain ATCC 700808 / DSM 15171 / DSS-3)</name>
    <name type="common">Silicibacter pomeroyi</name>
    <dbReference type="NCBI Taxonomy" id="246200"/>
    <lineage>
        <taxon>Bacteria</taxon>
        <taxon>Pseudomonadati</taxon>
        <taxon>Pseudomonadota</taxon>
        <taxon>Alphaproteobacteria</taxon>
        <taxon>Rhodobacterales</taxon>
        <taxon>Roseobacteraceae</taxon>
        <taxon>Ruegeria</taxon>
    </lineage>
</organism>
<comment type="similarity">
    <text evidence="1">Belongs to the UPF0173 family.</text>
</comment>
<keyword id="KW-0378">Hydrolase</keyword>
<keyword id="KW-1185">Reference proteome</keyword>
<gene>
    <name type="ordered locus">SPO2976</name>
</gene>
<sequence>MKIIWLGHGSFRIESGEAVLLVDPWLNGNPTLPEDQHDAAVIGATHILLTHTHFDHVVDVLPLARLLKVPVVGQYDLMGYWSEAEEIETVGFNKGGTVTLNGVRVSMVPASHSSTFTTPDGLRSGGSEVGYMIAAEGHVVYLSGDTGIMADMDWMGDYYKPDIGILSAGGHFTMDMQGAAYAAKRYFNFKTVIPCHYRSFPILEQSAQALIDGLPGVEVIEPQVMQAIEV</sequence>
<name>Y2976_RUEPO</name>
<reference key="1">
    <citation type="journal article" date="2004" name="Nature">
        <title>Genome sequence of Silicibacter pomeroyi reveals adaptations to the marine environment.</title>
        <authorList>
            <person name="Moran M.A."/>
            <person name="Buchan A."/>
            <person name="Gonzalez J.M."/>
            <person name="Heidelberg J.F."/>
            <person name="Whitman W.B."/>
            <person name="Kiene R.P."/>
            <person name="Henriksen J.R."/>
            <person name="King G.M."/>
            <person name="Belas R."/>
            <person name="Fuqua C."/>
            <person name="Brinkac L.M."/>
            <person name="Lewis M."/>
            <person name="Johri S."/>
            <person name="Weaver B."/>
            <person name="Pai G."/>
            <person name="Eisen J.A."/>
            <person name="Rahe E."/>
            <person name="Sheldon W.M."/>
            <person name="Ye W."/>
            <person name="Miller T.R."/>
            <person name="Carlton J."/>
            <person name="Rasko D.A."/>
            <person name="Paulsen I.T."/>
            <person name="Ren Q."/>
            <person name="Daugherty S.C."/>
            <person name="DeBoy R.T."/>
            <person name="Dodson R.J."/>
            <person name="Durkin A.S."/>
            <person name="Madupu R."/>
            <person name="Nelson W.C."/>
            <person name="Sullivan S.A."/>
            <person name="Rosovitz M.J."/>
            <person name="Haft D.H."/>
            <person name="Selengut J."/>
            <person name="Ward N."/>
        </authorList>
    </citation>
    <scope>NUCLEOTIDE SEQUENCE [LARGE SCALE GENOMIC DNA]</scope>
    <source>
        <strain>ATCC 700808 / DSM 15171 / DSS-3</strain>
    </source>
</reference>
<reference key="2">
    <citation type="journal article" date="2014" name="Stand. Genomic Sci.">
        <title>An updated genome annotation for the model marine bacterium Ruegeria pomeroyi DSS-3.</title>
        <authorList>
            <person name="Rivers A.R."/>
            <person name="Smith C.B."/>
            <person name="Moran M.A."/>
        </authorList>
    </citation>
    <scope>GENOME REANNOTATION</scope>
    <source>
        <strain>ATCC 700808 / DSM 15171 / DSS-3</strain>
    </source>
</reference>
<evidence type="ECO:0000255" key="1">
    <source>
        <dbReference type="HAMAP-Rule" id="MF_00457"/>
    </source>
</evidence>
<feature type="chain" id="PRO_0000367215" description="UPF0173 metal-dependent hydrolase SPO2976">
    <location>
        <begin position="1"/>
        <end position="230"/>
    </location>
</feature>